<reference key="1">
    <citation type="journal article" date="2002" name="Nat. Biotechnol.">
        <title>Genome sequence of the dissimilatory metal ion-reducing bacterium Shewanella oneidensis.</title>
        <authorList>
            <person name="Heidelberg J.F."/>
            <person name="Paulsen I.T."/>
            <person name="Nelson K.E."/>
            <person name="Gaidos E.J."/>
            <person name="Nelson W.C."/>
            <person name="Read T.D."/>
            <person name="Eisen J.A."/>
            <person name="Seshadri R."/>
            <person name="Ward N.L."/>
            <person name="Methe B.A."/>
            <person name="Clayton R.A."/>
            <person name="Meyer T."/>
            <person name="Tsapin A."/>
            <person name="Scott J."/>
            <person name="Beanan M.J."/>
            <person name="Brinkac L.M."/>
            <person name="Daugherty S.C."/>
            <person name="DeBoy R.T."/>
            <person name="Dodson R.J."/>
            <person name="Durkin A.S."/>
            <person name="Haft D.H."/>
            <person name="Kolonay J.F."/>
            <person name="Madupu R."/>
            <person name="Peterson J.D."/>
            <person name="Umayam L.A."/>
            <person name="White O."/>
            <person name="Wolf A.M."/>
            <person name="Vamathevan J.J."/>
            <person name="Weidman J.F."/>
            <person name="Impraim M."/>
            <person name="Lee K."/>
            <person name="Berry K.J."/>
            <person name="Lee C."/>
            <person name="Mueller J."/>
            <person name="Khouri H.M."/>
            <person name="Gill J."/>
            <person name="Utterback T.R."/>
            <person name="McDonald L.A."/>
            <person name="Feldblyum T.V."/>
            <person name="Smith H.O."/>
            <person name="Venter J.C."/>
            <person name="Nealson K.H."/>
            <person name="Fraser C.M."/>
        </authorList>
    </citation>
    <scope>NUCLEOTIDE SEQUENCE [LARGE SCALE GENOMIC DNA]</scope>
    <source>
        <strain>ATCC 700550 / JCM 31522 / CIP 106686 / LMG 19005 / NCIMB 14063 / MR-1</strain>
    </source>
</reference>
<protein>
    <recommendedName>
        <fullName evidence="1">Ribosomal RNA small subunit methyltransferase G</fullName>
        <ecNumber evidence="1">2.1.1.170</ecNumber>
    </recommendedName>
    <alternativeName>
        <fullName evidence="1">16S rRNA 7-methylguanosine methyltransferase</fullName>
        <shortName evidence="1">16S rRNA m7G methyltransferase</shortName>
    </alternativeName>
</protein>
<gene>
    <name evidence="1" type="primary">rsmG</name>
    <name type="ordered locus">SO_4757</name>
</gene>
<keyword id="KW-0963">Cytoplasm</keyword>
<keyword id="KW-0489">Methyltransferase</keyword>
<keyword id="KW-1185">Reference proteome</keyword>
<keyword id="KW-0698">rRNA processing</keyword>
<keyword id="KW-0949">S-adenosyl-L-methionine</keyword>
<keyword id="KW-0808">Transferase</keyword>
<comment type="function">
    <text evidence="1">Specifically methylates the N7 position of guanine in position 527 of 16S rRNA.</text>
</comment>
<comment type="catalytic activity">
    <reaction evidence="1">
        <text>guanosine(527) in 16S rRNA + S-adenosyl-L-methionine = N(7)-methylguanosine(527) in 16S rRNA + S-adenosyl-L-homocysteine</text>
        <dbReference type="Rhea" id="RHEA:42732"/>
        <dbReference type="Rhea" id="RHEA-COMP:10209"/>
        <dbReference type="Rhea" id="RHEA-COMP:10210"/>
        <dbReference type="ChEBI" id="CHEBI:57856"/>
        <dbReference type="ChEBI" id="CHEBI:59789"/>
        <dbReference type="ChEBI" id="CHEBI:74269"/>
        <dbReference type="ChEBI" id="CHEBI:74480"/>
        <dbReference type="EC" id="2.1.1.170"/>
    </reaction>
</comment>
<comment type="subcellular location">
    <subcellularLocation>
        <location evidence="1">Cytoplasm</location>
    </subcellularLocation>
</comment>
<comment type="similarity">
    <text evidence="1">Belongs to the methyltransferase superfamily. RNA methyltransferase RsmG family.</text>
</comment>
<organism>
    <name type="scientific">Shewanella oneidensis (strain ATCC 700550 / JCM 31522 / CIP 106686 / LMG 19005 / NCIMB 14063 / MR-1)</name>
    <dbReference type="NCBI Taxonomy" id="211586"/>
    <lineage>
        <taxon>Bacteria</taxon>
        <taxon>Pseudomonadati</taxon>
        <taxon>Pseudomonadota</taxon>
        <taxon>Gammaproteobacteria</taxon>
        <taxon>Alteromonadales</taxon>
        <taxon>Shewanellaceae</taxon>
        <taxon>Shewanella</taxon>
    </lineage>
</organism>
<sequence length="206" mass="23353">MLSAQLEAYLAEINLPATAEQKKQLLDFVGMLNKWNKAYNLTSVRDPEIMLVRHIMDSLVVSKHLQGDRFIDVGTGPGLPGIPLAIMNPDKTFVLLDSLGKRIRFQKQVAFELGIHNVSSIESRVEAYQPEQKFDGVLSRAFASIHDMLTWCHHLPAEHGQFYALKGQLSDDEMQHIPTGFAITETIELKVPRLDEQRHLLKIIKE</sequence>
<accession>Q8E8B0</accession>
<evidence type="ECO:0000255" key="1">
    <source>
        <dbReference type="HAMAP-Rule" id="MF_00074"/>
    </source>
</evidence>
<proteinExistence type="inferred from homology"/>
<feature type="chain" id="PRO_0000184325" description="Ribosomal RNA small subunit methyltransferase G">
    <location>
        <begin position="1"/>
        <end position="206"/>
    </location>
</feature>
<feature type="binding site" evidence="1">
    <location>
        <position position="74"/>
    </location>
    <ligand>
        <name>S-adenosyl-L-methionine</name>
        <dbReference type="ChEBI" id="CHEBI:59789"/>
    </ligand>
</feature>
<feature type="binding site" evidence="1">
    <location>
        <position position="79"/>
    </location>
    <ligand>
        <name>S-adenosyl-L-methionine</name>
        <dbReference type="ChEBI" id="CHEBI:59789"/>
    </ligand>
</feature>
<feature type="binding site" evidence="1">
    <location>
        <begin position="125"/>
        <end position="126"/>
    </location>
    <ligand>
        <name>S-adenosyl-L-methionine</name>
        <dbReference type="ChEBI" id="CHEBI:59789"/>
    </ligand>
</feature>
<feature type="binding site" evidence="1">
    <location>
        <position position="140"/>
    </location>
    <ligand>
        <name>S-adenosyl-L-methionine</name>
        <dbReference type="ChEBI" id="CHEBI:59789"/>
    </ligand>
</feature>
<name>RSMG_SHEON</name>
<dbReference type="EC" id="2.1.1.170" evidence="1"/>
<dbReference type="EMBL" id="AE014299">
    <property type="protein sequence ID" value="AAN57716.1"/>
    <property type="molecule type" value="Genomic_DNA"/>
</dbReference>
<dbReference type="RefSeq" id="NP_720273.1">
    <property type="nucleotide sequence ID" value="NC_004347.2"/>
</dbReference>
<dbReference type="RefSeq" id="WP_011074339.1">
    <property type="nucleotide sequence ID" value="NC_004347.2"/>
</dbReference>
<dbReference type="SMR" id="Q8E8B0"/>
<dbReference type="STRING" id="211586.SO_4757"/>
<dbReference type="PaxDb" id="211586-SO_4757"/>
<dbReference type="KEGG" id="son:SO_4757"/>
<dbReference type="PATRIC" id="fig|211586.12.peg.4614"/>
<dbReference type="eggNOG" id="COG0357">
    <property type="taxonomic scope" value="Bacteria"/>
</dbReference>
<dbReference type="HOGENOM" id="CLU_065341_2_0_6"/>
<dbReference type="OrthoDB" id="9808773at2"/>
<dbReference type="PhylomeDB" id="Q8E8B0"/>
<dbReference type="BioCyc" id="SONE211586:G1GMP-4402-MONOMER"/>
<dbReference type="Proteomes" id="UP000008186">
    <property type="component" value="Chromosome"/>
</dbReference>
<dbReference type="GO" id="GO:0005829">
    <property type="term" value="C:cytosol"/>
    <property type="evidence" value="ECO:0000318"/>
    <property type="project" value="GO_Central"/>
</dbReference>
<dbReference type="GO" id="GO:0070043">
    <property type="term" value="F:rRNA (guanine-N7-)-methyltransferase activity"/>
    <property type="evidence" value="ECO:0000318"/>
    <property type="project" value="GO_Central"/>
</dbReference>
<dbReference type="CDD" id="cd02440">
    <property type="entry name" value="AdoMet_MTases"/>
    <property type="match status" value="1"/>
</dbReference>
<dbReference type="FunFam" id="3.40.50.150:FF:000032">
    <property type="entry name" value="Ribosomal RNA small subunit methyltransferase G"/>
    <property type="match status" value="1"/>
</dbReference>
<dbReference type="Gene3D" id="3.40.50.150">
    <property type="entry name" value="Vaccinia Virus protein VP39"/>
    <property type="match status" value="1"/>
</dbReference>
<dbReference type="HAMAP" id="MF_00074">
    <property type="entry name" value="16SrRNA_methyltr_G"/>
    <property type="match status" value="1"/>
</dbReference>
<dbReference type="InterPro" id="IPR003682">
    <property type="entry name" value="rRNA_ssu_MeTfrase_G"/>
</dbReference>
<dbReference type="InterPro" id="IPR029063">
    <property type="entry name" value="SAM-dependent_MTases_sf"/>
</dbReference>
<dbReference type="NCBIfam" id="TIGR00138">
    <property type="entry name" value="rsmG_gidB"/>
    <property type="match status" value="1"/>
</dbReference>
<dbReference type="PANTHER" id="PTHR31760">
    <property type="entry name" value="S-ADENOSYL-L-METHIONINE-DEPENDENT METHYLTRANSFERASES SUPERFAMILY PROTEIN"/>
    <property type="match status" value="1"/>
</dbReference>
<dbReference type="PANTHER" id="PTHR31760:SF0">
    <property type="entry name" value="S-ADENOSYL-L-METHIONINE-DEPENDENT METHYLTRANSFERASES SUPERFAMILY PROTEIN"/>
    <property type="match status" value="1"/>
</dbReference>
<dbReference type="Pfam" id="PF02527">
    <property type="entry name" value="GidB"/>
    <property type="match status" value="1"/>
</dbReference>
<dbReference type="PIRSF" id="PIRSF003078">
    <property type="entry name" value="GidB"/>
    <property type="match status" value="1"/>
</dbReference>
<dbReference type="SUPFAM" id="SSF53335">
    <property type="entry name" value="S-adenosyl-L-methionine-dependent methyltransferases"/>
    <property type="match status" value="1"/>
</dbReference>